<organism>
    <name type="scientific">Bacillus mycoides (strain KBAB4)</name>
    <name type="common">Bacillus weihenstephanensis</name>
    <dbReference type="NCBI Taxonomy" id="315730"/>
    <lineage>
        <taxon>Bacteria</taxon>
        <taxon>Bacillati</taxon>
        <taxon>Bacillota</taxon>
        <taxon>Bacilli</taxon>
        <taxon>Bacillales</taxon>
        <taxon>Bacillaceae</taxon>
        <taxon>Bacillus</taxon>
        <taxon>Bacillus cereus group</taxon>
    </lineage>
</organism>
<protein>
    <recommendedName>
        <fullName evidence="1">Probable endonuclease 4</fullName>
        <ecNumber evidence="1">3.1.21.2</ecNumber>
    </recommendedName>
    <alternativeName>
        <fullName evidence="1">Endodeoxyribonuclease IV</fullName>
    </alternativeName>
    <alternativeName>
        <fullName evidence="1">Endonuclease IV</fullName>
    </alternativeName>
</protein>
<comment type="function">
    <text evidence="1">Endonuclease IV plays a role in DNA repair. It cleaves phosphodiester bonds at apurinic or apyrimidinic (AP) sites, generating a 3'-hydroxyl group and a 5'-terminal sugar phosphate.</text>
</comment>
<comment type="catalytic activity">
    <reaction evidence="1">
        <text>Endonucleolytic cleavage to 5'-phosphooligonucleotide end-products.</text>
        <dbReference type="EC" id="3.1.21.2"/>
    </reaction>
</comment>
<comment type="cofactor">
    <cofactor evidence="1">
        <name>Zn(2+)</name>
        <dbReference type="ChEBI" id="CHEBI:29105"/>
    </cofactor>
    <text evidence="1">Binds 3 Zn(2+) ions.</text>
</comment>
<comment type="similarity">
    <text evidence="1">Belongs to the AP endonuclease 2 family.</text>
</comment>
<keyword id="KW-0227">DNA damage</keyword>
<keyword id="KW-0234">DNA repair</keyword>
<keyword id="KW-0255">Endonuclease</keyword>
<keyword id="KW-0378">Hydrolase</keyword>
<keyword id="KW-0479">Metal-binding</keyword>
<keyword id="KW-0540">Nuclease</keyword>
<keyword id="KW-0862">Zinc</keyword>
<evidence type="ECO:0000255" key="1">
    <source>
        <dbReference type="HAMAP-Rule" id="MF_00152"/>
    </source>
</evidence>
<dbReference type="EC" id="3.1.21.2" evidence="1"/>
<dbReference type="EMBL" id="CP000903">
    <property type="protein sequence ID" value="ABY45299.1"/>
    <property type="molecule type" value="Genomic_DNA"/>
</dbReference>
<dbReference type="RefSeq" id="WP_002088660.1">
    <property type="nucleotide sequence ID" value="NC_010184.1"/>
</dbReference>
<dbReference type="SMR" id="A9VHR4"/>
<dbReference type="KEGG" id="bwe:BcerKBAB4_4137"/>
<dbReference type="eggNOG" id="COG0648">
    <property type="taxonomic scope" value="Bacteria"/>
</dbReference>
<dbReference type="HOGENOM" id="CLU_025885_4_1_9"/>
<dbReference type="Proteomes" id="UP000002154">
    <property type="component" value="Chromosome"/>
</dbReference>
<dbReference type="GO" id="GO:0008833">
    <property type="term" value="F:deoxyribonuclease IV (phage-T4-induced) activity"/>
    <property type="evidence" value="ECO:0007669"/>
    <property type="project" value="UniProtKB-UniRule"/>
</dbReference>
<dbReference type="GO" id="GO:0003677">
    <property type="term" value="F:DNA binding"/>
    <property type="evidence" value="ECO:0007669"/>
    <property type="project" value="InterPro"/>
</dbReference>
<dbReference type="GO" id="GO:0003906">
    <property type="term" value="F:DNA-(apurinic or apyrimidinic site) endonuclease activity"/>
    <property type="evidence" value="ECO:0007669"/>
    <property type="project" value="TreeGrafter"/>
</dbReference>
<dbReference type="GO" id="GO:0008081">
    <property type="term" value="F:phosphoric diester hydrolase activity"/>
    <property type="evidence" value="ECO:0007669"/>
    <property type="project" value="TreeGrafter"/>
</dbReference>
<dbReference type="GO" id="GO:0008270">
    <property type="term" value="F:zinc ion binding"/>
    <property type="evidence" value="ECO:0007669"/>
    <property type="project" value="UniProtKB-UniRule"/>
</dbReference>
<dbReference type="GO" id="GO:0006284">
    <property type="term" value="P:base-excision repair"/>
    <property type="evidence" value="ECO:0007669"/>
    <property type="project" value="TreeGrafter"/>
</dbReference>
<dbReference type="CDD" id="cd00019">
    <property type="entry name" value="AP2Ec"/>
    <property type="match status" value="1"/>
</dbReference>
<dbReference type="FunFam" id="3.20.20.150:FF:000001">
    <property type="entry name" value="Probable endonuclease 4"/>
    <property type="match status" value="1"/>
</dbReference>
<dbReference type="Gene3D" id="3.20.20.150">
    <property type="entry name" value="Divalent-metal-dependent TIM barrel enzymes"/>
    <property type="match status" value="1"/>
</dbReference>
<dbReference type="HAMAP" id="MF_00152">
    <property type="entry name" value="Nfo"/>
    <property type="match status" value="1"/>
</dbReference>
<dbReference type="InterPro" id="IPR001719">
    <property type="entry name" value="AP_endonuc_2"/>
</dbReference>
<dbReference type="InterPro" id="IPR018246">
    <property type="entry name" value="AP_endonuc_F2_Zn_BS"/>
</dbReference>
<dbReference type="InterPro" id="IPR036237">
    <property type="entry name" value="Xyl_isomerase-like_sf"/>
</dbReference>
<dbReference type="InterPro" id="IPR013022">
    <property type="entry name" value="Xyl_isomerase-like_TIM-brl"/>
</dbReference>
<dbReference type="NCBIfam" id="TIGR00587">
    <property type="entry name" value="nfo"/>
    <property type="match status" value="1"/>
</dbReference>
<dbReference type="NCBIfam" id="NF002196">
    <property type="entry name" value="PRK01060.1-1"/>
    <property type="match status" value="1"/>
</dbReference>
<dbReference type="PANTHER" id="PTHR21445:SF0">
    <property type="entry name" value="APURINIC-APYRIMIDINIC ENDONUCLEASE"/>
    <property type="match status" value="1"/>
</dbReference>
<dbReference type="PANTHER" id="PTHR21445">
    <property type="entry name" value="ENDONUCLEASE IV ENDODEOXYRIBONUCLEASE IV"/>
    <property type="match status" value="1"/>
</dbReference>
<dbReference type="Pfam" id="PF01261">
    <property type="entry name" value="AP_endonuc_2"/>
    <property type="match status" value="1"/>
</dbReference>
<dbReference type="SMART" id="SM00518">
    <property type="entry name" value="AP2Ec"/>
    <property type="match status" value="1"/>
</dbReference>
<dbReference type="SUPFAM" id="SSF51658">
    <property type="entry name" value="Xylose isomerase-like"/>
    <property type="match status" value="1"/>
</dbReference>
<dbReference type="PROSITE" id="PS00729">
    <property type="entry name" value="AP_NUCLEASE_F2_1"/>
    <property type="match status" value="1"/>
</dbReference>
<dbReference type="PROSITE" id="PS00730">
    <property type="entry name" value="AP_NUCLEASE_F2_2"/>
    <property type="match status" value="1"/>
</dbReference>
<dbReference type="PROSITE" id="PS00731">
    <property type="entry name" value="AP_NUCLEASE_F2_3"/>
    <property type="match status" value="1"/>
</dbReference>
<dbReference type="PROSITE" id="PS51432">
    <property type="entry name" value="AP_NUCLEASE_F2_4"/>
    <property type="match status" value="1"/>
</dbReference>
<accession>A9VHR4</accession>
<sequence>MLKIGSHVSMSGKKMLLAASEEAVSYGATTFMIYTGAPQNTRRKPIEELNIEAGRKHMELNGIEEIIVHAPYIINLGNTTKPETFQLGVDFLRMEIERTSALGVAKQIVLHPGAHVGAGADAGIQQIIKGLNEVLTPEQTVNIALETMAGKGTECGRSFEEIAKIIDGVKYNEKLSVCFDTCHTHDAGYDLVNDFDGVLNEFDKIVGINRLQVLHINDSKNVRGAGKDRHENIGFGHIGYKALHHIVHHPQLTHVPKILETPYVGEDKKDKKPPYKLEIEMLKNGTFDEGILEKIKAQ</sequence>
<gene>
    <name evidence="1" type="primary">nfo</name>
    <name type="ordered locus">BcerKBAB4_4137</name>
</gene>
<name>END4_BACMK</name>
<feature type="chain" id="PRO_1000096868" description="Probable endonuclease 4">
    <location>
        <begin position="1"/>
        <end position="298"/>
    </location>
</feature>
<feature type="binding site" evidence="1">
    <location>
        <position position="69"/>
    </location>
    <ligand>
        <name>Zn(2+)</name>
        <dbReference type="ChEBI" id="CHEBI:29105"/>
        <label>1</label>
    </ligand>
</feature>
<feature type="binding site" evidence="1">
    <location>
        <position position="111"/>
    </location>
    <ligand>
        <name>Zn(2+)</name>
        <dbReference type="ChEBI" id="CHEBI:29105"/>
        <label>1</label>
    </ligand>
</feature>
<feature type="binding site" evidence="1">
    <location>
        <position position="146"/>
    </location>
    <ligand>
        <name>Zn(2+)</name>
        <dbReference type="ChEBI" id="CHEBI:29105"/>
        <label>1</label>
    </ligand>
</feature>
<feature type="binding site" evidence="1">
    <location>
        <position position="146"/>
    </location>
    <ligand>
        <name>Zn(2+)</name>
        <dbReference type="ChEBI" id="CHEBI:29105"/>
        <label>2</label>
    </ligand>
</feature>
<feature type="binding site" evidence="1">
    <location>
        <position position="180"/>
    </location>
    <ligand>
        <name>Zn(2+)</name>
        <dbReference type="ChEBI" id="CHEBI:29105"/>
        <label>2</label>
    </ligand>
</feature>
<feature type="binding site" evidence="1">
    <location>
        <position position="183"/>
    </location>
    <ligand>
        <name>Zn(2+)</name>
        <dbReference type="ChEBI" id="CHEBI:29105"/>
        <label>3</label>
    </ligand>
</feature>
<feature type="binding site" evidence="1">
    <location>
        <position position="215"/>
    </location>
    <ligand>
        <name>Zn(2+)</name>
        <dbReference type="ChEBI" id="CHEBI:29105"/>
        <label>2</label>
    </ligand>
</feature>
<feature type="binding site" evidence="1">
    <location>
        <position position="228"/>
    </location>
    <ligand>
        <name>Zn(2+)</name>
        <dbReference type="ChEBI" id="CHEBI:29105"/>
        <label>3</label>
    </ligand>
</feature>
<feature type="binding site" evidence="1">
    <location>
        <position position="230"/>
    </location>
    <ligand>
        <name>Zn(2+)</name>
        <dbReference type="ChEBI" id="CHEBI:29105"/>
        <label>3</label>
    </ligand>
</feature>
<feature type="binding site" evidence="1">
    <location>
        <position position="260"/>
    </location>
    <ligand>
        <name>Zn(2+)</name>
        <dbReference type="ChEBI" id="CHEBI:29105"/>
        <label>2</label>
    </ligand>
</feature>
<proteinExistence type="inferred from homology"/>
<reference key="1">
    <citation type="journal article" date="2008" name="Chem. Biol. Interact.">
        <title>Extending the Bacillus cereus group genomics to putative food-borne pathogens of different toxicity.</title>
        <authorList>
            <person name="Lapidus A."/>
            <person name="Goltsman E."/>
            <person name="Auger S."/>
            <person name="Galleron N."/>
            <person name="Segurens B."/>
            <person name="Dossat C."/>
            <person name="Land M.L."/>
            <person name="Broussolle V."/>
            <person name="Brillard J."/>
            <person name="Guinebretiere M.-H."/>
            <person name="Sanchis V."/>
            <person name="Nguen-the C."/>
            <person name="Lereclus D."/>
            <person name="Richardson P."/>
            <person name="Wincker P."/>
            <person name="Weissenbach J."/>
            <person name="Ehrlich S.D."/>
            <person name="Sorokin A."/>
        </authorList>
    </citation>
    <scope>NUCLEOTIDE SEQUENCE [LARGE SCALE GENOMIC DNA]</scope>
    <source>
        <strain>KBAB4</strain>
    </source>
</reference>